<organism>
    <name type="scientific">Tropidechis carinatus</name>
    <name type="common">Australian rough-scaled snake</name>
    <dbReference type="NCBI Taxonomy" id="100989"/>
    <lineage>
        <taxon>Eukaryota</taxon>
        <taxon>Metazoa</taxon>
        <taxon>Chordata</taxon>
        <taxon>Craniata</taxon>
        <taxon>Vertebrata</taxon>
        <taxon>Euteleostomi</taxon>
        <taxon>Lepidosauria</taxon>
        <taxon>Squamata</taxon>
        <taxon>Bifurcata</taxon>
        <taxon>Unidentata</taxon>
        <taxon>Episquamata</taxon>
        <taxon>Toxicofera</taxon>
        <taxon>Serpentes</taxon>
        <taxon>Colubroidea</taxon>
        <taxon>Elapidae</taxon>
        <taxon>Notechinae</taxon>
        <taxon>Tropidechis</taxon>
    </lineage>
</organism>
<feature type="chain" id="PRO_0000211531" description="Cysteine-rich venom protein tropirin">
    <location>
        <begin position="1"/>
        <end position="27" status="greater than"/>
    </location>
</feature>
<feature type="non-terminal residue">
    <location>
        <position position="27"/>
    </location>
</feature>
<protein>
    <recommendedName>
        <fullName>Cysteine-rich venom protein tropirin</fullName>
        <shortName>CRVP</shortName>
    </recommendedName>
</protein>
<reference key="1">
    <citation type="submission" date="1999-08" db="UniProtKB">
        <authorList>
            <person name="Kini M.R."/>
        </authorList>
    </citation>
    <scope>PROTEIN SEQUENCE</scope>
    <source>
        <tissue>Venom</tissue>
    </source>
</reference>
<proteinExistence type="evidence at protein level"/>
<name>CRVP_TROCA</name>
<dbReference type="GO" id="GO:0005576">
    <property type="term" value="C:extracellular region"/>
    <property type="evidence" value="ECO:0007669"/>
    <property type="project" value="UniProtKB-SubCell"/>
</dbReference>
<dbReference type="GO" id="GO:0005246">
    <property type="term" value="F:calcium channel regulator activity"/>
    <property type="evidence" value="ECO:0007669"/>
    <property type="project" value="UniProtKB-KW"/>
</dbReference>
<dbReference type="GO" id="GO:0090729">
    <property type="term" value="F:toxin activity"/>
    <property type="evidence" value="ECO:0007669"/>
    <property type="project" value="UniProtKB-KW"/>
</dbReference>
<sequence length="27" mass="3075">GGGKDYRVEIVDKHNXLRRSVXXTARN</sequence>
<accession>P81994</accession>
<comment type="function">
    <text evidence="1">Blocks contraction of smooth muscle elicited by high potassium-induced depolarization, but does not block caffeine-stimulated contraction. May target voltage-gated calcium channels on smooth muscle (By similarity).</text>
</comment>
<comment type="subcellular location">
    <subcellularLocation>
        <location>Secreted</location>
    </subcellularLocation>
</comment>
<comment type="tissue specificity">
    <text>Expressed by the venom gland.</text>
</comment>
<comment type="PTM">
    <text evidence="2">Contains 8 disulfide bonds.</text>
</comment>
<comment type="similarity">
    <text evidence="3">Belongs to the CRISP family.</text>
</comment>
<keyword id="KW-0108">Calcium channel impairing toxin</keyword>
<keyword id="KW-0903">Direct protein sequencing</keyword>
<keyword id="KW-1015">Disulfide bond</keyword>
<keyword id="KW-0872">Ion channel impairing toxin</keyword>
<keyword id="KW-0528">Neurotoxin</keyword>
<keyword id="KW-0964">Secreted</keyword>
<keyword id="KW-0800">Toxin</keyword>
<evidence type="ECO:0000250" key="1"/>
<evidence type="ECO:0000250" key="2">
    <source>
        <dbReference type="UniProtKB" id="P84808"/>
    </source>
</evidence>
<evidence type="ECO:0000305" key="3"/>